<sequence length="93" mass="10222">MKQFMLVKTFDALFAELSDKARTRPAGSGTVAALDAGVHGIGKKILEEAGEVWLAAEHEGDEALAEEISQLLYWTQVLMVSRGLTLDDVYRKL</sequence>
<dbReference type="EC" id="3.6.1.31" evidence="1"/>
<dbReference type="EMBL" id="CP000480">
    <property type="protein sequence ID" value="ABK75392.1"/>
    <property type="molecule type" value="Genomic_DNA"/>
</dbReference>
<dbReference type="EMBL" id="CP001663">
    <property type="protein sequence ID" value="AFP40541.1"/>
    <property type="molecule type" value="Genomic_DNA"/>
</dbReference>
<dbReference type="RefSeq" id="WP_003895567.1">
    <property type="nucleotide sequence ID" value="NZ_SIJM01000003.1"/>
</dbReference>
<dbReference type="RefSeq" id="YP_888460.1">
    <property type="nucleotide sequence ID" value="NC_008596.1"/>
</dbReference>
<dbReference type="SMR" id="A0QZX2"/>
<dbReference type="STRING" id="246196.MSMEG_4181"/>
<dbReference type="PaxDb" id="246196-MSMEI_4083"/>
<dbReference type="KEGG" id="msb:LJ00_20730"/>
<dbReference type="KEGG" id="msg:MSMEI_4083"/>
<dbReference type="KEGG" id="msm:MSMEG_4181"/>
<dbReference type="PATRIC" id="fig|246196.19.peg.4102"/>
<dbReference type="eggNOG" id="COG0140">
    <property type="taxonomic scope" value="Bacteria"/>
</dbReference>
<dbReference type="OrthoDB" id="3212875at2"/>
<dbReference type="UniPathway" id="UPA00031">
    <property type="reaction ID" value="UER00007"/>
</dbReference>
<dbReference type="Proteomes" id="UP000000757">
    <property type="component" value="Chromosome"/>
</dbReference>
<dbReference type="Proteomes" id="UP000006158">
    <property type="component" value="Chromosome"/>
</dbReference>
<dbReference type="GO" id="GO:0005737">
    <property type="term" value="C:cytoplasm"/>
    <property type="evidence" value="ECO:0007669"/>
    <property type="project" value="UniProtKB-SubCell"/>
</dbReference>
<dbReference type="GO" id="GO:0005524">
    <property type="term" value="F:ATP binding"/>
    <property type="evidence" value="ECO:0007669"/>
    <property type="project" value="UniProtKB-KW"/>
</dbReference>
<dbReference type="GO" id="GO:0004636">
    <property type="term" value="F:phosphoribosyl-ATP diphosphatase activity"/>
    <property type="evidence" value="ECO:0007669"/>
    <property type="project" value="UniProtKB-UniRule"/>
</dbReference>
<dbReference type="GO" id="GO:0000105">
    <property type="term" value="P:L-histidine biosynthetic process"/>
    <property type="evidence" value="ECO:0007669"/>
    <property type="project" value="UniProtKB-UniRule"/>
</dbReference>
<dbReference type="CDD" id="cd11547">
    <property type="entry name" value="NTP-PPase_HisE"/>
    <property type="match status" value="1"/>
</dbReference>
<dbReference type="Gene3D" id="1.10.287.1080">
    <property type="entry name" value="MazG-like"/>
    <property type="match status" value="1"/>
</dbReference>
<dbReference type="HAMAP" id="MF_01020">
    <property type="entry name" value="HisE"/>
    <property type="match status" value="1"/>
</dbReference>
<dbReference type="InterPro" id="IPR008179">
    <property type="entry name" value="HisE"/>
</dbReference>
<dbReference type="InterPro" id="IPR021130">
    <property type="entry name" value="PRib-ATP_PPHydrolase-like"/>
</dbReference>
<dbReference type="NCBIfam" id="TIGR03188">
    <property type="entry name" value="histidine_hisI"/>
    <property type="match status" value="1"/>
</dbReference>
<dbReference type="NCBIfam" id="NF001610">
    <property type="entry name" value="PRK00400.1-1"/>
    <property type="match status" value="1"/>
</dbReference>
<dbReference type="PANTHER" id="PTHR42945">
    <property type="entry name" value="HISTIDINE BIOSYNTHESIS BIFUNCTIONAL PROTEIN"/>
    <property type="match status" value="1"/>
</dbReference>
<dbReference type="PANTHER" id="PTHR42945:SF1">
    <property type="entry name" value="HISTIDINE BIOSYNTHESIS BIFUNCTIONAL PROTEIN HIS7"/>
    <property type="match status" value="1"/>
</dbReference>
<dbReference type="Pfam" id="PF01503">
    <property type="entry name" value="PRA-PH"/>
    <property type="match status" value="1"/>
</dbReference>
<dbReference type="SUPFAM" id="SSF101386">
    <property type="entry name" value="all-alpha NTP pyrophosphatases"/>
    <property type="match status" value="1"/>
</dbReference>
<name>HIS2_MYCS2</name>
<comment type="catalytic activity">
    <reaction evidence="1">
        <text>1-(5-phospho-beta-D-ribosyl)-ATP + H2O = 1-(5-phospho-beta-D-ribosyl)-5'-AMP + diphosphate + H(+)</text>
        <dbReference type="Rhea" id="RHEA:22828"/>
        <dbReference type="ChEBI" id="CHEBI:15377"/>
        <dbReference type="ChEBI" id="CHEBI:15378"/>
        <dbReference type="ChEBI" id="CHEBI:33019"/>
        <dbReference type="ChEBI" id="CHEBI:59457"/>
        <dbReference type="ChEBI" id="CHEBI:73183"/>
        <dbReference type="EC" id="3.6.1.31"/>
    </reaction>
</comment>
<comment type="pathway">
    <text evidence="1">Amino-acid biosynthesis; L-histidine biosynthesis; L-histidine from 5-phospho-alpha-D-ribose 1-diphosphate: step 2/9.</text>
</comment>
<comment type="subcellular location">
    <subcellularLocation>
        <location evidence="1">Cytoplasm</location>
    </subcellularLocation>
</comment>
<comment type="similarity">
    <text evidence="1">Belongs to the PRA-PH family.</text>
</comment>
<feature type="chain" id="PRO_1000063356" description="Phosphoribosyl-ATP pyrophosphatase">
    <location>
        <begin position="1"/>
        <end position="93"/>
    </location>
</feature>
<protein>
    <recommendedName>
        <fullName evidence="1">Phosphoribosyl-ATP pyrophosphatase</fullName>
        <shortName evidence="1">PRA-PH</shortName>
        <ecNumber evidence="1">3.6.1.31</ecNumber>
    </recommendedName>
</protein>
<proteinExistence type="inferred from homology"/>
<reference key="1">
    <citation type="submission" date="2006-10" db="EMBL/GenBank/DDBJ databases">
        <authorList>
            <person name="Fleischmann R.D."/>
            <person name="Dodson R.J."/>
            <person name="Haft D.H."/>
            <person name="Merkel J.S."/>
            <person name="Nelson W.C."/>
            <person name="Fraser C.M."/>
        </authorList>
    </citation>
    <scope>NUCLEOTIDE SEQUENCE [LARGE SCALE GENOMIC DNA]</scope>
    <source>
        <strain>ATCC 700084 / mc(2)155</strain>
    </source>
</reference>
<reference key="2">
    <citation type="journal article" date="2007" name="Genome Biol.">
        <title>Interrupted coding sequences in Mycobacterium smegmatis: authentic mutations or sequencing errors?</title>
        <authorList>
            <person name="Deshayes C."/>
            <person name="Perrodou E."/>
            <person name="Gallien S."/>
            <person name="Euphrasie D."/>
            <person name="Schaeffer C."/>
            <person name="Van-Dorsselaer A."/>
            <person name="Poch O."/>
            <person name="Lecompte O."/>
            <person name="Reyrat J.-M."/>
        </authorList>
    </citation>
    <scope>NUCLEOTIDE SEQUENCE [LARGE SCALE GENOMIC DNA]</scope>
    <source>
        <strain>ATCC 700084 / mc(2)155</strain>
    </source>
</reference>
<reference key="3">
    <citation type="journal article" date="2009" name="Genome Res.">
        <title>Ortho-proteogenomics: multiple proteomes investigation through orthology and a new MS-based protocol.</title>
        <authorList>
            <person name="Gallien S."/>
            <person name="Perrodou E."/>
            <person name="Carapito C."/>
            <person name="Deshayes C."/>
            <person name="Reyrat J.-M."/>
            <person name="Van Dorsselaer A."/>
            <person name="Poch O."/>
            <person name="Schaeffer C."/>
            <person name="Lecompte O."/>
        </authorList>
    </citation>
    <scope>NUCLEOTIDE SEQUENCE [LARGE SCALE GENOMIC DNA]</scope>
    <source>
        <strain>ATCC 700084 / mc(2)155</strain>
    </source>
</reference>
<accession>A0QZX2</accession>
<accession>I7GBI9</accession>
<keyword id="KW-0028">Amino-acid biosynthesis</keyword>
<keyword id="KW-0067">ATP-binding</keyword>
<keyword id="KW-0963">Cytoplasm</keyword>
<keyword id="KW-0368">Histidine biosynthesis</keyword>
<keyword id="KW-0378">Hydrolase</keyword>
<keyword id="KW-0547">Nucleotide-binding</keyword>
<keyword id="KW-1185">Reference proteome</keyword>
<evidence type="ECO:0000255" key="1">
    <source>
        <dbReference type="HAMAP-Rule" id="MF_01020"/>
    </source>
</evidence>
<organism>
    <name type="scientific">Mycolicibacterium smegmatis (strain ATCC 700084 / mc(2)155)</name>
    <name type="common">Mycobacterium smegmatis</name>
    <dbReference type="NCBI Taxonomy" id="246196"/>
    <lineage>
        <taxon>Bacteria</taxon>
        <taxon>Bacillati</taxon>
        <taxon>Actinomycetota</taxon>
        <taxon>Actinomycetes</taxon>
        <taxon>Mycobacteriales</taxon>
        <taxon>Mycobacteriaceae</taxon>
        <taxon>Mycolicibacterium</taxon>
    </lineage>
</organism>
<gene>
    <name evidence="1" type="primary">hisE</name>
    <name type="ordered locus">MSMEG_4181</name>
    <name type="ordered locus">MSMEI_4083</name>
</gene>